<dbReference type="EC" id="2.7.11.18"/>
<dbReference type="EMBL" id="AY237727">
    <property type="protein sequence ID" value="AAO85808.1"/>
    <property type="molecule type" value="mRNA"/>
</dbReference>
<dbReference type="EMBL" id="AF314149">
    <property type="protein sequence ID" value="AAG34169.1"/>
    <property type="molecule type" value="mRNA"/>
</dbReference>
<dbReference type="EMBL" id="AY237726">
    <property type="protein sequence ID" value="AAO85807.1"/>
    <property type="status" value="ALT_INIT"/>
    <property type="molecule type" value="mRNA"/>
</dbReference>
<dbReference type="EMBL" id="AK162008">
    <property type="protein sequence ID" value="BAE36678.1"/>
    <property type="molecule type" value="mRNA"/>
</dbReference>
<dbReference type="EMBL" id="BC034209">
    <property type="protein sequence ID" value="AAH34209.1"/>
    <property type="molecule type" value="mRNA"/>
</dbReference>
<dbReference type="EMBL" id="BC045197">
    <property type="protein sequence ID" value="AAH45197.1"/>
    <property type="molecule type" value="mRNA"/>
</dbReference>
<dbReference type="EMBL" id="BC058610">
    <property type="protein sequence ID" value="AAH58610.2"/>
    <property type="status" value="ALT_INIT"/>
    <property type="molecule type" value="mRNA"/>
</dbReference>
<dbReference type="EMBL" id="AF335470">
    <property type="protein sequence ID" value="AAK53241.1"/>
    <property type="molecule type" value="Genomic_DNA"/>
</dbReference>
<dbReference type="SMR" id="Q6PDN3"/>
<dbReference type="FunCoup" id="Q6PDN3">
    <property type="interactions" value="923"/>
</dbReference>
<dbReference type="IntAct" id="Q6PDN3">
    <property type="interactions" value="20"/>
</dbReference>
<dbReference type="MINT" id="Q6PDN3"/>
<dbReference type="STRING" id="10090.ENSMUSP00000023538"/>
<dbReference type="MoonDB" id="Q6PDN3">
    <property type="type" value="Predicted"/>
</dbReference>
<dbReference type="GlyGen" id="Q6PDN3">
    <property type="glycosylation" value="2 sites, 1 N-linked glycan (1 site)"/>
</dbReference>
<dbReference type="iPTMnet" id="Q6PDN3"/>
<dbReference type="PhosphoSitePlus" id="Q6PDN3"/>
<dbReference type="jPOST" id="Q6PDN3"/>
<dbReference type="PaxDb" id="10090-ENSMUSP00000023538"/>
<dbReference type="PeptideAtlas" id="Q6PDN3"/>
<dbReference type="ProteomicsDB" id="286099">
    <molecule id="Q6PDN3-1"/>
</dbReference>
<dbReference type="ProteomicsDB" id="286100">
    <molecule id="Q6PDN3-2"/>
</dbReference>
<dbReference type="ProteomicsDB" id="286101">
    <molecule id="Q6PDN3-3"/>
</dbReference>
<dbReference type="ProteomicsDB" id="286102">
    <molecule id="Q6PDN3-4"/>
</dbReference>
<dbReference type="Pumba" id="Q6PDN3"/>
<dbReference type="Antibodypedia" id="4044">
    <property type="antibodies" value="401 antibodies from 36 providers"/>
</dbReference>
<dbReference type="Ensembl" id="ENSMUST00000231589.2">
    <molecule id="Q6PDN3-4"/>
    <property type="protein sequence ID" value="ENSMUSP00000156149.2"/>
    <property type="gene ID" value="ENSMUSG00000022836.12"/>
</dbReference>
<dbReference type="UCSC" id="uc007zbe.1">
    <molecule id="Q6PDN3-1"/>
    <property type="organism name" value="mouse"/>
</dbReference>
<dbReference type="UCSC" id="uc007zbh.1">
    <molecule id="Q6PDN3-4"/>
    <property type="organism name" value="mouse"/>
</dbReference>
<dbReference type="AGR" id="MGI:894806"/>
<dbReference type="MGI" id="MGI:894806">
    <property type="gene designation" value="Mylk"/>
</dbReference>
<dbReference type="VEuPathDB" id="HostDB:ENSMUSG00000022836"/>
<dbReference type="eggNOG" id="KOG0613">
    <property type="taxonomic scope" value="Eukaryota"/>
</dbReference>
<dbReference type="GeneTree" id="ENSGT00940000157879"/>
<dbReference type="InParanoid" id="Q6PDN3"/>
<dbReference type="OMA" id="GAPIKTG"/>
<dbReference type="BRENDA" id="2.7.11.18">
    <property type="organism ID" value="3474"/>
</dbReference>
<dbReference type="Reactome" id="R-MMU-445355">
    <property type="pathway name" value="Smooth Muscle Contraction"/>
</dbReference>
<dbReference type="Reactome" id="R-MMU-5627123">
    <property type="pathway name" value="RHO GTPases activate PAKs"/>
</dbReference>
<dbReference type="ChiTaRS" id="Mylk">
    <property type="organism name" value="mouse"/>
</dbReference>
<dbReference type="PRO" id="PR:Q6PDN3"/>
<dbReference type="Proteomes" id="UP000000589">
    <property type="component" value="Chromosome 16"/>
</dbReference>
<dbReference type="RNAct" id="Q6PDN3">
    <property type="molecule type" value="protein"/>
</dbReference>
<dbReference type="Bgee" id="ENSMUSG00000022836">
    <property type="expression patterns" value="Expressed in ureter smooth muscle and 247 other cell types or tissues"/>
</dbReference>
<dbReference type="ExpressionAtlas" id="Q6PDN3">
    <property type="expression patterns" value="baseline and differential"/>
</dbReference>
<dbReference type="GO" id="GO:0005911">
    <property type="term" value="C:cell-cell junction"/>
    <property type="evidence" value="ECO:0000314"/>
    <property type="project" value="MGI"/>
</dbReference>
<dbReference type="GO" id="GO:0032154">
    <property type="term" value="C:cleavage furrow"/>
    <property type="evidence" value="ECO:0007669"/>
    <property type="project" value="UniProtKB-SubCell"/>
</dbReference>
<dbReference type="GO" id="GO:0005737">
    <property type="term" value="C:cytoplasm"/>
    <property type="evidence" value="ECO:0007669"/>
    <property type="project" value="UniProtKB-SubCell"/>
</dbReference>
<dbReference type="GO" id="GO:0030027">
    <property type="term" value="C:lamellipodium"/>
    <property type="evidence" value="ECO:0007669"/>
    <property type="project" value="UniProtKB-SubCell"/>
</dbReference>
<dbReference type="GO" id="GO:0001725">
    <property type="term" value="C:stress fiber"/>
    <property type="evidence" value="ECO:0007669"/>
    <property type="project" value="UniProtKB-SubCell"/>
</dbReference>
<dbReference type="GO" id="GO:0003779">
    <property type="term" value="F:actin binding"/>
    <property type="evidence" value="ECO:0007669"/>
    <property type="project" value="UniProtKB-KW"/>
</dbReference>
<dbReference type="GO" id="GO:0005524">
    <property type="term" value="F:ATP binding"/>
    <property type="evidence" value="ECO:0007669"/>
    <property type="project" value="UniProtKB-KW"/>
</dbReference>
<dbReference type="GO" id="GO:0005516">
    <property type="term" value="F:calmodulin binding"/>
    <property type="evidence" value="ECO:0007669"/>
    <property type="project" value="UniProtKB-KW"/>
</dbReference>
<dbReference type="GO" id="GO:0019899">
    <property type="term" value="F:enzyme binding"/>
    <property type="evidence" value="ECO:0000353"/>
    <property type="project" value="UniProtKB"/>
</dbReference>
<dbReference type="GO" id="GO:0046872">
    <property type="term" value="F:metal ion binding"/>
    <property type="evidence" value="ECO:0007669"/>
    <property type="project" value="UniProtKB-KW"/>
</dbReference>
<dbReference type="GO" id="GO:0004687">
    <property type="term" value="F:myosin light chain kinase activity"/>
    <property type="evidence" value="ECO:0007669"/>
    <property type="project" value="UniProtKB-EC"/>
</dbReference>
<dbReference type="GO" id="GO:0071277">
    <property type="term" value="P:cellular response to calcium ion"/>
    <property type="evidence" value="ECO:0000314"/>
    <property type="project" value="MGI"/>
</dbReference>
<dbReference type="GO" id="GO:0035865">
    <property type="term" value="P:cellular response to potassium ion"/>
    <property type="evidence" value="ECO:0000314"/>
    <property type="project" value="MGI"/>
</dbReference>
<dbReference type="GO" id="GO:0071466">
    <property type="term" value="P:cellular response to xenobiotic stimulus"/>
    <property type="evidence" value="ECO:0000314"/>
    <property type="project" value="MGI"/>
</dbReference>
<dbReference type="GO" id="GO:0098969">
    <property type="term" value="P:neurotransmitter receptor transport to postsynaptic membrane"/>
    <property type="evidence" value="ECO:0000314"/>
    <property type="project" value="SynGO"/>
</dbReference>
<dbReference type="GO" id="GO:0006939">
    <property type="term" value="P:smooth muscle contraction"/>
    <property type="evidence" value="ECO:0000315"/>
    <property type="project" value="UniProtKB"/>
</dbReference>
<dbReference type="GO" id="GO:0014820">
    <property type="term" value="P:tonic smooth muscle contraction"/>
    <property type="evidence" value="ECO:0000315"/>
    <property type="project" value="UniProtKB"/>
</dbReference>
<dbReference type="CDD" id="cd00063">
    <property type="entry name" value="FN3"/>
    <property type="match status" value="1"/>
</dbReference>
<dbReference type="CDD" id="cd20976">
    <property type="entry name" value="IgI_4_MYLK-like"/>
    <property type="match status" value="1"/>
</dbReference>
<dbReference type="CDD" id="cd05762">
    <property type="entry name" value="IgI_8_hMLCK_like"/>
    <property type="match status" value="1"/>
</dbReference>
<dbReference type="CDD" id="cd20973">
    <property type="entry name" value="IgI_telokin-like"/>
    <property type="match status" value="1"/>
</dbReference>
<dbReference type="CDD" id="cd14191">
    <property type="entry name" value="STKc_MLCK1"/>
    <property type="match status" value="1"/>
</dbReference>
<dbReference type="FunFam" id="2.60.40.10:FF:000147">
    <property type="entry name" value="Myosin light chain kinase"/>
    <property type="match status" value="1"/>
</dbReference>
<dbReference type="FunFam" id="2.60.40.10:FF:000425">
    <property type="entry name" value="Myosin light chain kinase"/>
    <property type="match status" value="1"/>
</dbReference>
<dbReference type="FunFam" id="1.10.510.10:FF:000175">
    <property type="entry name" value="Myosin light chain kinase, smooth muscle"/>
    <property type="match status" value="1"/>
</dbReference>
<dbReference type="FunFam" id="2.60.40.10:FF:000080">
    <property type="entry name" value="Myosin light chain kinase, smooth muscle"/>
    <property type="match status" value="3"/>
</dbReference>
<dbReference type="FunFam" id="2.60.40.10:FF:000145">
    <property type="entry name" value="Myosin light chain kinase, smooth muscle"/>
    <property type="match status" value="1"/>
</dbReference>
<dbReference type="FunFam" id="2.60.40.10:FF:000297">
    <property type="entry name" value="Myosin light chain kinase, smooth muscle"/>
    <property type="match status" value="1"/>
</dbReference>
<dbReference type="FunFam" id="2.60.40.10:FF:000372">
    <property type="entry name" value="Myosin light chain kinase, smooth muscle"/>
    <property type="match status" value="1"/>
</dbReference>
<dbReference type="FunFam" id="2.60.40.10:FF:000516">
    <property type="entry name" value="Myosin light chain kinase, smooth muscle"/>
    <property type="match status" value="1"/>
</dbReference>
<dbReference type="FunFam" id="2.60.40.10:FF:000580">
    <property type="entry name" value="Myosin light chain kinase, smooth muscle"/>
    <property type="match status" value="1"/>
</dbReference>
<dbReference type="FunFam" id="3.30.200.20:FF:000198">
    <property type="entry name" value="Myosin light chain kinase, smooth muscle"/>
    <property type="match status" value="1"/>
</dbReference>
<dbReference type="Gene3D" id="2.60.40.10">
    <property type="entry name" value="Immunoglobulins"/>
    <property type="match status" value="10"/>
</dbReference>
<dbReference type="Gene3D" id="3.30.200.20">
    <property type="entry name" value="Phosphorylase Kinase, domain 1"/>
    <property type="match status" value="1"/>
</dbReference>
<dbReference type="Gene3D" id="1.10.510.10">
    <property type="entry name" value="Transferase(Phosphotransferase) domain 1"/>
    <property type="match status" value="1"/>
</dbReference>
<dbReference type="InterPro" id="IPR003961">
    <property type="entry name" value="FN3_dom"/>
</dbReference>
<dbReference type="InterPro" id="IPR036116">
    <property type="entry name" value="FN3_sf"/>
</dbReference>
<dbReference type="InterPro" id="IPR007110">
    <property type="entry name" value="Ig-like_dom"/>
</dbReference>
<dbReference type="InterPro" id="IPR036179">
    <property type="entry name" value="Ig-like_dom_sf"/>
</dbReference>
<dbReference type="InterPro" id="IPR013783">
    <property type="entry name" value="Ig-like_fold"/>
</dbReference>
<dbReference type="InterPro" id="IPR013098">
    <property type="entry name" value="Ig_I-set"/>
</dbReference>
<dbReference type="InterPro" id="IPR003599">
    <property type="entry name" value="Ig_sub"/>
</dbReference>
<dbReference type="InterPro" id="IPR003598">
    <property type="entry name" value="Ig_sub2"/>
</dbReference>
<dbReference type="InterPro" id="IPR011009">
    <property type="entry name" value="Kinase-like_dom_sf"/>
</dbReference>
<dbReference type="InterPro" id="IPR015725">
    <property type="entry name" value="MLCK1_kinase_dom"/>
</dbReference>
<dbReference type="InterPro" id="IPR000719">
    <property type="entry name" value="Prot_kinase_dom"/>
</dbReference>
<dbReference type="InterPro" id="IPR017441">
    <property type="entry name" value="Protein_kinase_ATP_BS"/>
</dbReference>
<dbReference type="InterPro" id="IPR008271">
    <property type="entry name" value="Ser/Thr_kinase_AS"/>
</dbReference>
<dbReference type="PANTHER" id="PTHR47633">
    <property type="entry name" value="IMMUNOGLOBULIN"/>
    <property type="match status" value="1"/>
</dbReference>
<dbReference type="Pfam" id="PF16620">
    <property type="entry name" value="23ISL"/>
    <property type="match status" value="1"/>
</dbReference>
<dbReference type="Pfam" id="PF00041">
    <property type="entry name" value="fn3"/>
    <property type="match status" value="1"/>
</dbReference>
<dbReference type="Pfam" id="PF07679">
    <property type="entry name" value="I-set"/>
    <property type="match status" value="9"/>
</dbReference>
<dbReference type="Pfam" id="PF00069">
    <property type="entry name" value="Pkinase"/>
    <property type="match status" value="1"/>
</dbReference>
<dbReference type="SMART" id="SM00060">
    <property type="entry name" value="FN3"/>
    <property type="match status" value="1"/>
</dbReference>
<dbReference type="SMART" id="SM00409">
    <property type="entry name" value="IG"/>
    <property type="match status" value="9"/>
</dbReference>
<dbReference type="SMART" id="SM00408">
    <property type="entry name" value="IGc2"/>
    <property type="match status" value="9"/>
</dbReference>
<dbReference type="SMART" id="SM00220">
    <property type="entry name" value="S_TKc"/>
    <property type="match status" value="1"/>
</dbReference>
<dbReference type="SUPFAM" id="SSF49265">
    <property type="entry name" value="Fibronectin type III"/>
    <property type="match status" value="1"/>
</dbReference>
<dbReference type="SUPFAM" id="SSF48726">
    <property type="entry name" value="Immunoglobulin"/>
    <property type="match status" value="9"/>
</dbReference>
<dbReference type="SUPFAM" id="SSF56112">
    <property type="entry name" value="Protein kinase-like (PK-like)"/>
    <property type="match status" value="1"/>
</dbReference>
<dbReference type="PROSITE" id="PS50853">
    <property type="entry name" value="FN3"/>
    <property type="match status" value="1"/>
</dbReference>
<dbReference type="PROSITE" id="PS50835">
    <property type="entry name" value="IG_LIKE"/>
    <property type="match status" value="9"/>
</dbReference>
<dbReference type="PROSITE" id="PS00107">
    <property type="entry name" value="PROTEIN_KINASE_ATP"/>
    <property type="match status" value="1"/>
</dbReference>
<dbReference type="PROSITE" id="PS50011">
    <property type="entry name" value="PROTEIN_KINASE_DOM"/>
    <property type="match status" value="1"/>
</dbReference>
<dbReference type="PROSITE" id="PS00108">
    <property type="entry name" value="PROTEIN_KINASE_ST"/>
    <property type="match status" value="1"/>
</dbReference>
<proteinExistence type="evidence at protein level"/>
<name>MYLK_MOUSE</name>
<sequence length="1941" mass="212925">MGDVKLFASSHMSKTSHSVDPSKVSSMPLTEAPAFILPPRNLCVKEGATAKFEGRVRGYPEPQVTWHRKGQAITNGGRFLLDCGVRGTFSLVIHTVREEDKGKYTCEASNGSGARQVTVELTVEGNSMKKRDQPVLSKASGFPGETRPSIWGECPPKFATKLGRAVVKEGQMWRFSCKITGRPPPQVTWLKGNVPLQPSARVSMSEKNGMQILEIRGVTRDDLGVYTCMVVNGSGKASMSAELSIPGLDNASRLAVRGTKAPSPDIRKEVTNGVSKDPETVAESKNCPSPQRSGSSARATNSHLKSPQEPKPKLCEDAPRKVPQSSILQKSTSTITLQALKVQPEARVPAIGSFSPGEDRKSLAAPQQATLPTRQSSLGGSVGNKFVTGNIPRESQRESTFPRFESQPQSQEVTEGQTVKFICEVSGIPKPDVGWFLEGIPVRRREGITEVYEDGVSHHLCLLRARTRDSRKYSCTASNSLGQVSCSWSLLVDRPNLAQTAPSFSSVLKDSVVIEGQDFVLRCSVQGTPAPRVTWLLNGQPIQFAHSICEAGVAELHIQDALPEDRGTYTCLAENAMGQVSCSATVTVQEKKGEGEREHRLSPARSKPIAPIFLQGLSDLKVMDGSQVTMTVQVSGNPPPEVIWLHDGNEIQESEDFHFEQKGGWHSLCIQEVFPEDTGTYTCEAWNSAGEVRTRAVLTVQEPHDGTQPWFISKPRSVTATLGQSVLISCAIAGDPFPTVHWLRDGRALSKDSGHFELLQNEDVFTLVLKNVQPWHAGQYEILLKNRVGECSCQVSLMLHNSPSRAPPRGREPASCEGLCGGGGVGAHGDGDRHGTLRPCWPARGQGWPEEEDGEDVRGLLKRRVETRLHTEEAIRQQEVGQLDFRDLLGKKVSTKTVSEDDLKDIPAEQMDFRANLQRQVKPKTISEEERKVHSPQQVDFRSVLAKKGTPKTPVPEKAPPKAATPDFRSVLGGKKKSPSENGGNSAEVLNVKAGESPTPAGDAQAIGALKPVGNAKPAETPKPIGNAKPTETLKPVGNTKPAETLKPIANAQPSGSLKPVTNAQPAEPQKPVGNAKSAETSKPAGKEEVKEVKNDVNCKKGQVGATGNEKRPESQGSAPVFKEKLQDVHVAEGEKLLLQCQVISDPPATVTWSLNGKTLKTTKFIVLAQEGSRFSVSIEKALPEDRGLYKCVAKNSAGQAECSCQVTVDDAQTSENTKAPEMKSRRPKSSLPPVLGTESDATVKKKPAPKTPTKAAMPPQIIQFPEDQKVRAGEPVELFGKVAGTQPITCKWMKFRKQIQESEHIKVENGESGSKLTILAARQEHCGCYTLVVENKLGSRQAQVNLTVVDKPDPPAGTPCASDIRSSSLTLSWYGSSYDGGSAVQSYNVEIWDTEDKVWKELATCRSTSFNVQDLLPDREYKFRVRAVNVYGTSEPSQESELTAVGEKPEEPKDEVEVSDDDEKEPEVDYRTVTVNTEQKVSDVYDIEERLGSGKFGQVFRLVEKKTGKIWAGKFFKAYSAKEKDNIRQEISIMNCLHHPKLVQCVDAFEEKANIVMVLEIVSGGELFERIIDEDFELTERECIKYMRQISEGVEYIHKQGIVHLDLKPENIMCVNKTGTRIKLIDFGLARRLENAGSLKVLFGTPEFVAPEVINYEPIGYATDMWSIGVICYILVSGLSPFMGDNDNETLANVTSATWDFDDEAFDEISDDAKDFISNLLKKDMKNRLDCTQCLQHPWLMKDTKNMEAKKLSKDRMKKYMARRKWQKTGNAVRAIGRLSSMAMISGLSGRKSSTGSPTSPINAEKLESEDDVSQAFLEAVAEEKPHVKPYFSKTIRDLEVVEGSAARFDCKIEGYPDPEVVWFKDDQSIRESRHFQIDYDEDGNCSLIISDVCGDDDAKYTCKAVNSLGEATCTAELIVETMEEGEGEEGGEEEEEEEE</sequence>
<reference key="1">
    <citation type="journal article" date="2000" name="Am. J. Physiol.">
        <title>Smooth muscle myosin light chain kinase expression in cardiac and skeletal muscle.</title>
        <authorList>
            <person name="Herring B.P."/>
            <person name="Dixon S.A."/>
            <person name="Gallagher P.J."/>
        </authorList>
    </citation>
    <scope>NUCLEOTIDE SEQUENCE [MRNA] (ISOFORM 3)</scope>
    <source>
        <strain>C3H/HeJ</strain>
        <tissue>Cardiac myocyte</tissue>
    </source>
</reference>
<reference evidence="26 27" key="2">
    <citation type="journal article" date="2001" name="Am. J. Physiol.">
        <title>Telokin expression is restricted to smooth muscle tissues during mouse development.</title>
        <authorList>
            <person name="Herring B.P."/>
            <person name="Lyons G.E."/>
            <person name="Hoggatt A.M."/>
            <person name="Gallagher P.J."/>
        </authorList>
    </citation>
    <scope>NUCLEOTIDE SEQUENCE [MRNA] (ISOFORM 4)</scope>
    <scope>TISSUE SPECIFICITY</scope>
    <scope>DEVELOPMENTAL STAGE</scope>
    <source>
        <strain evidence="27">Swiss Webster / NIH</strain>
    </source>
</reference>
<reference evidence="26 32" key="3">
    <citation type="journal article" date="2002" name="Am. J. Physiol.">
        <title>220- and 130-kDa MLCKs have distinct tissue distributions and intracellular localization patterns.</title>
        <authorList>
            <person name="Blue E.K."/>
            <person name="Goeckeler Z.M."/>
            <person name="Jin Y."/>
            <person name="Hou L."/>
            <person name="Dixon S.A."/>
            <person name="Herring B.P."/>
            <person name="Wysolmerski R.B."/>
            <person name="Gallagher P.J."/>
        </authorList>
    </citation>
    <scope>NUCLEOTIDE SEQUENCE [MRNA] (ISOFORM 1)</scope>
    <scope>FUNCTION</scope>
    <scope>SUBCELLULAR LOCATION</scope>
    <scope>TISSUE SPECIFICITY</scope>
    <scope>DEVELOPMENTAL STAGE</scope>
    <source>
        <strain evidence="32">C3H/HeJ</strain>
        <tissue evidence="10">Cardiac myocyte</tissue>
    </source>
</reference>
<reference evidence="33" key="4">
    <citation type="journal article" date="2005" name="Science">
        <title>The transcriptional landscape of the mammalian genome.</title>
        <authorList>
            <person name="Carninci P."/>
            <person name="Kasukawa T."/>
            <person name="Katayama S."/>
            <person name="Gough J."/>
            <person name="Frith M.C."/>
            <person name="Maeda N."/>
            <person name="Oyama R."/>
            <person name="Ravasi T."/>
            <person name="Lenhard B."/>
            <person name="Wells C."/>
            <person name="Kodzius R."/>
            <person name="Shimokawa K."/>
            <person name="Bajic V.B."/>
            <person name="Brenner S.E."/>
            <person name="Batalov S."/>
            <person name="Forrest A.R."/>
            <person name="Zavolan M."/>
            <person name="Davis M.J."/>
            <person name="Wilming L.G."/>
            <person name="Aidinis V."/>
            <person name="Allen J.E."/>
            <person name="Ambesi-Impiombato A."/>
            <person name="Apweiler R."/>
            <person name="Aturaliya R.N."/>
            <person name="Bailey T.L."/>
            <person name="Bansal M."/>
            <person name="Baxter L."/>
            <person name="Beisel K.W."/>
            <person name="Bersano T."/>
            <person name="Bono H."/>
            <person name="Chalk A.M."/>
            <person name="Chiu K.P."/>
            <person name="Choudhary V."/>
            <person name="Christoffels A."/>
            <person name="Clutterbuck D.R."/>
            <person name="Crowe M.L."/>
            <person name="Dalla E."/>
            <person name="Dalrymple B.P."/>
            <person name="de Bono B."/>
            <person name="Della Gatta G."/>
            <person name="di Bernardo D."/>
            <person name="Down T."/>
            <person name="Engstrom P."/>
            <person name="Fagiolini M."/>
            <person name="Faulkner G."/>
            <person name="Fletcher C.F."/>
            <person name="Fukushima T."/>
            <person name="Furuno M."/>
            <person name="Futaki S."/>
            <person name="Gariboldi M."/>
            <person name="Georgii-Hemming P."/>
            <person name="Gingeras T.R."/>
            <person name="Gojobori T."/>
            <person name="Green R.E."/>
            <person name="Gustincich S."/>
            <person name="Harbers M."/>
            <person name="Hayashi Y."/>
            <person name="Hensch T.K."/>
            <person name="Hirokawa N."/>
            <person name="Hill D."/>
            <person name="Huminiecki L."/>
            <person name="Iacono M."/>
            <person name="Ikeo K."/>
            <person name="Iwama A."/>
            <person name="Ishikawa T."/>
            <person name="Jakt M."/>
            <person name="Kanapin A."/>
            <person name="Katoh M."/>
            <person name="Kawasawa Y."/>
            <person name="Kelso J."/>
            <person name="Kitamura H."/>
            <person name="Kitano H."/>
            <person name="Kollias G."/>
            <person name="Krishnan S.P."/>
            <person name="Kruger A."/>
            <person name="Kummerfeld S.K."/>
            <person name="Kurochkin I.V."/>
            <person name="Lareau L.F."/>
            <person name="Lazarevic D."/>
            <person name="Lipovich L."/>
            <person name="Liu J."/>
            <person name="Liuni S."/>
            <person name="McWilliam S."/>
            <person name="Madan Babu M."/>
            <person name="Madera M."/>
            <person name="Marchionni L."/>
            <person name="Matsuda H."/>
            <person name="Matsuzawa S."/>
            <person name="Miki H."/>
            <person name="Mignone F."/>
            <person name="Miyake S."/>
            <person name="Morris K."/>
            <person name="Mottagui-Tabar S."/>
            <person name="Mulder N."/>
            <person name="Nakano N."/>
            <person name="Nakauchi H."/>
            <person name="Ng P."/>
            <person name="Nilsson R."/>
            <person name="Nishiguchi S."/>
            <person name="Nishikawa S."/>
            <person name="Nori F."/>
            <person name="Ohara O."/>
            <person name="Okazaki Y."/>
            <person name="Orlando V."/>
            <person name="Pang K.C."/>
            <person name="Pavan W.J."/>
            <person name="Pavesi G."/>
            <person name="Pesole G."/>
            <person name="Petrovsky N."/>
            <person name="Piazza S."/>
            <person name="Reed J."/>
            <person name="Reid J.F."/>
            <person name="Ring B.Z."/>
            <person name="Ringwald M."/>
            <person name="Rost B."/>
            <person name="Ruan Y."/>
            <person name="Salzberg S.L."/>
            <person name="Sandelin A."/>
            <person name="Schneider C."/>
            <person name="Schoenbach C."/>
            <person name="Sekiguchi K."/>
            <person name="Semple C.A."/>
            <person name="Seno S."/>
            <person name="Sessa L."/>
            <person name="Sheng Y."/>
            <person name="Shibata Y."/>
            <person name="Shimada H."/>
            <person name="Shimada K."/>
            <person name="Silva D."/>
            <person name="Sinclair B."/>
            <person name="Sperling S."/>
            <person name="Stupka E."/>
            <person name="Sugiura K."/>
            <person name="Sultana R."/>
            <person name="Takenaka Y."/>
            <person name="Taki K."/>
            <person name="Tammoja K."/>
            <person name="Tan S.L."/>
            <person name="Tang S."/>
            <person name="Taylor M.S."/>
            <person name="Tegner J."/>
            <person name="Teichmann S.A."/>
            <person name="Ueda H.R."/>
            <person name="van Nimwegen E."/>
            <person name="Verardo R."/>
            <person name="Wei C.L."/>
            <person name="Yagi K."/>
            <person name="Yamanishi H."/>
            <person name="Zabarovsky E."/>
            <person name="Zhu S."/>
            <person name="Zimmer A."/>
            <person name="Hide W."/>
            <person name="Bult C."/>
            <person name="Grimmond S.M."/>
            <person name="Teasdale R.D."/>
            <person name="Liu E.T."/>
            <person name="Brusic V."/>
            <person name="Quackenbush J."/>
            <person name="Wahlestedt C."/>
            <person name="Mattick J.S."/>
            <person name="Hume D.A."/>
            <person name="Kai C."/>
            <person name="Sasaki D."/>
            <person name="Tomaru Y."/>
            <person name="Fukuda S."/>
            <person name="Kanamori-Katayama M."/>
            <person name="Suzuki M."/>
            <person name="Aoki J."/>
            <person name="Arakawa T."/>
            <person name="Iida J."/>
            <person name="Imamura K."/>
            <person name="Itoh M."/>
            <person name="Kato T."/>
            <person name="Kawaji H."/>
            <person name="Kawagashira N."/>
            <person name="Kawashima T."/>
            <person name="Kojima M."/>
            <person name="Kondo S."/>
            <person name="Konno H."/>
            <person name="Nakano K."/>
            <person name="Ninomiya N."/>
            <person name="Nishio T."/>
            <person name="Okada M."/>
            <person name="Plessy C."/>
            <person name="Shibata K."/>
            <person name="Shiraki T."/>
            <person name="Suzuki S."/>
            <person name="Tagami M."/>
            <person name="Waki K."/>
            <person name="Watahiki A."/>
            <person name="Okamura-Oho Y."/>
            <person name="Suzuki H."/>
            <person name="Kawai J."/>
            <person name="Hayashizaki Y."/>
        </authorList>
    </citation>
    <scope>NUCLEOTIDE SEQUENCE [LARGE SCALE MRNA] (ISOFORM 2)</scope>
    <source>
        <strain evidence="33">C57BL/6J</strain>
        <tissue evidence="33">Wolffian duct</tissue>
    </source>
</reference>
<reference evidence="30" key="5">
    <citation type="journal article" date="2004" name="Genome Res.">
        <title>The status, quality, and expansion of the NIH full-length cDNA project: the Mammalian Gene Collection (MGC).</title>
        <authorList>
            <consortium name="The MGC Project Team"/>
        </authorList>
    </citation>
    <scope>NUCLEOTIDE SEQUENCE [LARGE SCALE MRNA] (ISOFORM 1)</scope>
    <source>
        <strain evidence="30">C3H/He</strain>
        <strain evidence="28">FVB/N</strain>
        <tissue evidence="28">Colon</tissue>
        <tissue evidence="29">Mammary gland</tissue>
        <tissue evidence="30">Osteoblast</tissue>
    </source>
</reference>
<reference evidence="31" key="6">
    <citation type="journal article" date="2001" name="Genomics">
        <title>The myosin light chain kinase gene is not duplicated in mouse: partial structure and chromosomal localization of Mylk.</title>
        <authorList>
            <person name="Giorgi D.G."/>
            <person name="Ferraz C."/>
            <person name="Mattei M.-G."/>
            <person name="Demaille J."/>
            <person name="Rouquier S."/>
        </authorList>
    </citation>
    <scope>NUCLEOTIDE SEQUENCE [GENOMIC DNA] OF 1-1561 (ISOFORM 1)</scope>
    <source>
        <strain evidence="31">C57BL/6J</strain>
    </source>
</reference>
<reference key="7">
    <citation type="journal article" date="1996" name="Am. J. Physiol.">
        <title>Telokin expression is mediated by a smooth muscle cell-specific promoter.</title>
        <authorList>
            <person name="Herring B.P."/>
            <person name="Smith A.F."/>
        </authorList>
    </citation>
    <scope>TISSUE SPECIFICITY</scope>
    <scope>ALTERNATIVE PROMOTER USAGE (ISOFORM 4)</scope>
</reference>
<reference key="8">
    <citation type="journal article" date="2002" name="Gastroenterology">
        <title>Intestinal infection with Giardia spp. reduces epithelial barrier function in a myosin light chain kinase-dependent fashion.</title>
        <authorList>
            <person name="Scott K.G.-E."/>
            <person name="Meddings J.B."/>
            <person name="Kirk D.R."/>
            <person name="Lees-Miller S.P."/>
            <person name="Buret A.G."/>
        </authorList>
    </citation>
    <scope>FUNCTION IN GIARDIASIS</scope>
</reference>
<reference evidence="26" key="9">
    <citation type="journal article" date="2005" name="Am. J. Physiol.">
        <title>Deletion of MLCK210 induces subtle changes in vascular reactivity but does not affect cardiac function.</title>
        <authorList>
            <person name="Ohlmann P."/>
            <person name="Tesse A."/>
            <person name="Loichot C."/>
            <person name="Ralay Ranaivo H."/>
            <person name="Roul G."/>
            <person name="Philippe C."/>
            <person name="Watterson D.M."/>
            <person name="Haiech J."/>
            <person name="Andriantsitohaina R."/>
        </authorList>
    </citation>
    <scope>FUNCTION</scope>
    <scope>DISRUPTION PHENOTYPE</scope>
</reference>
<reference key="10">
    <citation type="journal article" date="2005" name="J. Clin. Invest.">
        <title>Epithelial myosin light chain kinase-dependent barrier dysfunction mediates T cell activation-induced diarrhea in vivo.</title>
        <authorList>
            <person name="Clayburgh D.R."/>
            <person name="Barrett T.A."/>
            <person name="Tang Y."/>
            <person name="Meddings J.B."/>
            <person name="Van Eldik L.J."/>
            <person name="Watterson D.M."/>
            <person name="Clarke L.L."/>
            <person name="Mrsny R.J."/>
            <person name="Turner J.R."/>
        </authorList>
    </citation>
    <scope>FUNCTION IN INTESTINAL BARRIER DYSFUNCTION</scope>
</reference>
<reference key="11">
    <citation type="journal article" date="2007" name="J. Cell Sci.">
        <title>Supervillin slows cell spreading by facilitating myosin II activation at the cell periphery.</title>
        <authorList>
            <person name="Takizawa N."/>
            <person name="Ikebe R."/>
            <person name="Ikebe M."/>
            <person name="Luna E.J."/>
        </authorList>
    </citation>
    <scope>INTERACTION WITH SVIL</scope>
</reference>
<reference key="12">
    <citation type="journal article" date="2007" name="Proc. Natl. Acad. Sci. U.S.A.">
        <title>Large-scale phosphorylation analysis of mouse liver.</title>
        <authorList>
            <person name="Villen J."/>
            <person name="Beausoleil S.A."/>
            <person name="Gerber S.A."/>
            <person name="Gygi S.P."/>
        </authorList>
    </citation>
    <scope>PHOSPHORYLATION [LARGE SCALE ANALYSIS] AT SER-355; SER-1782 AND SER-1798</scope>
    <scope>IDENTIFICATION BY MASS SPECTROMETRY [LARGE SCALE ANALYSIS]</scope>
    <source>
        <tissue>Liver</tissue>
    </source>
</reference>
<reference key="13">
    <citation type="journal article" date="2007" name="Shock">
        <title>A role for long chain myosin light chain kinase (MLCK-210) in microvascular hyperpermeability during severe burns.</title>
        <authorList>
            <person name="Reynoso R."/>
            <person name="Perrin R.M."/>
            <person name="Breslin J.W."/>
            <person name="Daines D.A."/>
            <person name="Watson K.D."/>
            <person name="Watterson D.M."/>
            <person name="Wu M.H."/>
            <person name="Yuan S."/>
        </authorList>
    </citation>
    <scope>FUNCTION IN MICROVASCULAR HYPERPERMEABILITY DURING SEVERE BURNS</scope>
    <scope>DISRUPTION PHENOTYPE</scope>
</reference>
<reference key="14">
    <citation type="journal article" date="2008" name="Gastroenterology">
        <title>Myosin light chain kinase is central to smooth muscle contraction and required for gastrointestinal motility in mice.</title>
        <authorList>
            <person name="He W.-Q."/>
            <person name="Peng Y.-J."/>
            <person name="Zhang W.-C."/>
            <person name="Lv N."/>
            <person name="Tang J."/>
            <person name="Chen C."/>
            <person name="Zhang C.-H."/>
            <person name="Gao S."/>
            <person name="Chen H.-Q."/>
            <person name="Zhi G."/>
            <person name="Feil R."/>
            <person name="Kamm K.E."/>
            <person name="Stull J.T."/>
            <person name="Gao X."/>
            <person name="Zhu M.-S."/>
        </authorList>
    </citation>
    <scope>FUNCTION IN SMOOTH MUSCLE CONTRACTION</scope>
</reference>
<reference key="15">
    <citation type="journal article" date="2008" name="Nat. Immunol.">
        <title>Nonmuscle myosin light-chain kinase mediates neutrophil transmigration in sepsis-induced lung inflammation by activating beta2 integrins.</title>
        <authorList>
            <person name="Xu J."/>
            <person name="Gao X.-P."/>
            <person name="Ramchandran R."/>
            <person name="Zhao Y.-Y."/>
            <person name="Vogel S.M."/>
            <person name="Malik A.B."/>
        </authorList>
    </citation>
    <scope>FUNCTION AS PTK2B/PYK2 KINASE</scope>
    <scope>INTERACTION WITH PTK2B/PYK2</scope>
</reference>
<reference key="16">
    <citation type="journal article" date="2010" name="Cell">
        <title>A tissue-specific atlas of mouse protein phosphorylation and expression.</title>
        <authorList>
            <person name="Huttlin E.L."/>
            <person name="Jedrychowski M.P."/>
            <person name="Elias J.E."/>
            <person name="Goswami T."/>
            <person name="Rad R."/>
            <person name="Beausoleil S.A."/>
            <person name="Villen J."/>
            <person name="Haas W."/>
            <person name="Sowa M.E."/>
            <person name="Gygi S.P."/>
        </authorList>
    </citation>
    <scope>PHOSPHORYLATION [LARGE SCALE ANALYSIS] AT SER-333; SER-355; SER-935; SER-1460; SER-1781; SER-1782; SER-1795; SER-1798; THR-1800 AND SER-1801</scope>
    <scope>IDENTIFICATION BY MASS SPECTROMETRY [LARGE SCALE ANALYSIS]</scope>
    <source>
        <tissue>Brown adipose tissue</tissue>
        <tissue>Heart</tissue>
        <tissue>Kidney</tissue>
        <tissue>Liver</tissue>
        <tissue>Lung</tissue>
        <tissue>Pancreas</tissue>
        <tissue>Spleen</tissue>
        <tissue>Testis</tissue>
    </source>
</reference>
<reference key="17">
    <citation type="journal article" date="2010" name="Cell">
        <title>A family of protein-deglutamylating enzymes associated with neurodegeneration.</title>
        <authorList>
            <person name="Rogowski K."/>
            <person name="van Dijk J."/>
            <person name="Magiera M.M."/>
            <person name="Bosc C."/>
            <person name="Deloulme J.C."/>
            <person name="Bosson A."/>
            <person name="Peris L."/>
            <person name="Gold N.D."/>
            <person name="Lacroix B."/>
            <person name="Grau M.B."/>
            <person name="Bec N."/>
            <person name="Larroque C."/>
            <person name="Desagher S."/>
            <person name="Holzer M."/>
            <person name="Andrieux A."/>
            <person name="Moutin M.J."/>
            <person name="Janke C."/>
        </authorList>
    </citation>
    <scope>DEGLUTAMYLATION</scope>
</reference>
<reference key="18">
    <citation type="journal article" date="2010" name="J. Biol. Chem.">
        <title>Myosin light chain kinase is necessary for tonic airway smooth muscle contraction.</title>
        <authorList>
            <person name="Zhang W.-C."/>
            <person name="Peng Y.-J."/>
            <person name="Zhang G.-S."/>
            <person name="He W.-Q."/>
            <person name="Qiao Y.-N."/>
            <person name="Dong Y.-Y."/>
            <person name="Gao Y.-Q."/>
            <person name="Chen C."/>
            <person name="Zhang C.-H."/>
            <person name="Li W."/>
            <person name="Shen H.-H."/>
            <person name="Ning W."/>
            <person name="Kamm K.E."/>
            <person name="Stull J.T."/>
            <person name="Gao X."/>
            <person name="Zhu M.-S."/>
        </authorList>
    </citation>
    <scope>FUNCTION IN TONIC AIRWAY SMOOTH MUSCLE CONTRACTION</scope>
</reference>
<reference key="19">
    <citation type="journal article" date="2010" name="Proc. Natl. Acad. Sci. U.S.A.">
        <title>MLCK-dependent exchange and actin binding region-dependent anchoring of ZO-1 regulate tight junction barrier function.</title>
        <authorList>
            <person name="Yu D."/>
            <person name="Marchiando A.M."/>
            <person name="Weber C.R."/>
            <person name="Raleigh D.R."/>
            <person name="Wang Y."/>
            <person name="Shen L."/>
            <person name="Turner J.R."/>
        </authorList>
    </citation>
    <scope>FUNCTION IN TIGHT JUNCTION REGULATION</scope>
</reference>
<feature type="chain" id="PRO_0000233949" description="Myosin light chain kinase, smooth muscle">
    <location>
        <begin position="1"/>
        <end position="1941"/>
    </location>
</feature>
<feature type="chain" id="PRO_0000403732" description="Myosin light chain kinase, smooth muscle, deglutamylated form">
    <location>
        <begin position="1"/>
        <end position="1934"/>
    </location>
</feature>
<feature type="domain" description="Ig-like C2-type 1" evidence="3">
    <location>
        <begin position="33"/>
        <end position="122"/>
    </location>
</feature>
<feature type="domain" description="Ig-like C2-type 2" evidence="3">
    <location>
        <begin position="156"/>
        <end position="244"/>
    </location>
</feature>
<feature type="domain" description="Ig-like C2-type 3" evidence="3">
    <location>
        <begin position="402"/>
        <end position="485"/>
    </location>
</feature>
<feature type="domain" description="Ig-like C2-type 4" evidence="3">
    <location>
        <begin position="502"/>
        <end position="587"/>
    </location>
</feature>
<feature type="domain" description="Ig-like C2-type 5" evidence="3">
    <location>
        <begin position="611"/>
        <end position="699"/>
    </location>
</feature>
<feature type="domain" description="Ig-like C2-type 6" evidence="3">
    <location>
        <begin position="709"/>
        <end position="809"/>
    </location>
</feature>
<feature type="repeat" description="1-1" evidence="2">
    <location>
        <begin position="856"/>
        <end position="883"/>
    </location>
</feature>
<feature type="repeat" description="1-2" evidence="2">
    <location>
        <begin position="884"/>
        <end position="911"/>
    </location>
</feature>
<feature type="repeat" description="1-3" evidence="2">
    <location>
        <begin position="912"/>
        <end position="939"/>
    </location>
</feature>
<feature type="repeat" description="1-4" evidence="2">
    <location>
        <begin position="940"/>
        <end position="966"/>
    </location>
</feature>
<feature type="repeat" description="1-5; truncated">
    <location>
        <begin position="967"/>
        <end position="985"/>
    </location>
</feature>
<feature type="repeat" description="2-1" evidence="2">
    <location>
        <begin position="990"/>
        <end position="1002"/>
    </location>
</feature>
<feature type="repeat" description="2-2" evidence="2">
    <location>
        <begin position="1003"/>
        <end position="1014"/>
    </location>
</feature>
<feature type="repeat" description="2-3" evidence="2">
    <location>
        <begin position="1015"/>
        <end position="1026"/>
    </location>
</feature>
<feature type="repeat" description="2-4" evidence="2">
    <location>
        <begin position="1027"/>
        <end position="1038"/>
    </location>
</feature>
<feature type="repeat" description="2-5" evidence="2">
    <location>
        <begin position="1039"/>
        <end position="1049"/>
    </location>
</feature>
<feature type="domain" description="Ig-like C2-type 7" evidence="3">
    <location>
        <begin position="1120"/>
        <end position="1208"/>
    </location>
</feature>
<feature type="domain" description="Ig-like C2-type 8" evidence="3">
    <location>
        <begin position="1260"/>
        <end position="1348"/>
    </location>
</feature>
<feature type="domain" description="Fibronectin type-III" evidence="6">
    <location>
        <begin position="1356"/>
        <end position="1449"/>
    </location>
</feature>
<feature type="domain" description="Protein kinase" evidence="5">
    <location>
        <begin position="1486"/>
        <end position="1741"/>
    </location>
</feature>
<feature type="domain" description="Ig-like C2-type 9" evidence="3">
    <location>
        <begin position="1831"/>
        <end position="1920"/>
    </location>
</feature>
<feature type="region of interest" description="Disordered" evidence="8">
    <location>
        <begin position="255"/>
        <end position="329"/>
    </location>
</feature>
<feature type="region of interest" description="5 X 28 AA approximate tandem repeats">
    <location>
        <begin position="856"/>
        <end position="985"/>
    </location>
</feature>
<feature type="region of interest" description="Actin-binding (calcium/calmodulin-sensitive)" evidence="1">
    <location>
        <begin position="911"/>
        <end position="951"/>
    </location>
</feature>
<feature type="region of interest" description="Disordered" evidence="8">
    <location>
        <begin position="920"/>
        <end position="1120"/>
    </location>
</feature>
<feature type="region of interest" description="Calmodulin-binding" evidence="1">
    <location>
        <begin position="936"/>
        <end position="951"/>
    </location>
</feature>
<feature type="region of interest" description="5 X 12 AA approximate tandem repeats">
    <location>
        <begin position="990"/>
        <end position="1049"/>
    </location>
</feature>
<feature type="region of interest" description="Actin-binding (calcium/calmodulin-insensitive)" evidence="1">
    <location>
        <begin position="1048"/>
        <end position="1482"/>
    </location>
</feature>
<feature type="region of interest" description="Disordered" evidence="8">
    <location>
        <begin position="1212"/>
        <end position="1257"/>
    </location>
</feature>
<feature type="region of interest" description="Disordered" evidence="8">
    <location>
        <begin position="1435"/>
        <end position="1469"/>
    </location>
</feature>
<feature type="region of interest" description="Calmodulin-binding" evidence="2">
    <location>
        <begin position="1733"/>
        <end position="1796"/>
    </location>
</feature>
<feature type="region of interest" description="Disordered" evidence="8">
    <location>
        <begin position="1789"/>
        <end position="1809"/>
    </location>
</feature>
<feature type="compositionally biased region" description="Polar residues" evidence="8">
    <location>
        <begin position="286"/>
        <end position="305"/>
    </location>
</feature>
<feature type="compositionally biased region" description="Basic and acidic residues" evidence="8">
    <location>
        <begin position="306"/>
        <end position="320"/>
    </location>
</feature>
<feature type="compositionally biased region" description="Polar residues" evidence="8">
    <location>
        <begin position="1052"/>
        <end position="1065"/>
    </location>
</feature>
<feature type="compositionally biased region" description="Basic and acidic residues" evidence="8">
    <location>
        <begin position="1085"/>
        <end position="1099"/>
    </location>
</feature>
<feature type="compositionally biased region" description="Acidic residues" evidence="8">
    <location>
        <begin position="1453"/>
        <end position="1467"/>
    </location>
</feature>
<feature type="compositionally biased region" description="Polar residues" evidence="8">
    <location>
        <begin position="1792"/>
        <end position="1803"/>
    </location>
</feature>
<feature type="active site" description="Proton acceptor" evidence="5 7">
    <location>
        <position position="1607"/>
    </location>
</feature>
<feature type="binding site" evidence="5">
    <location>
        <begin position="1492"/>
        <end position="1500"/>
    </location>
    <ligand>
        <name>ATP</name>
        <dbReference type="ChEBI" id="CHEBI:30616"/>
    </ligand>
</feature>
<feature type="binding site" evidence="5">
    <location>
        <position position="1515"/>
    </location>
    <ligand>
        <name>ATP</name>
        <dbReference type="ChEBI" id="CHEBI:30616"/>
    </ligand>
</feature>
<feature type="modified residue" description="Phosphotyrosine; by ABL1" evidence="2">
    <location>
        <position position="226"/>
    </location>
</feature>
<feature type="modified residue" description="Phosphoserine" evidence="2">
    <location>
        <position position="295"/>
    </location>
</feature>
<feature type="modified residue" description="Phosphoserine" evidence="36">
    <location>
        <position position="333"/>
    </location>
</feature>
<feature type="modified residue" description="Phosphoserine" evidence="35 36">
    <location>
        <position position="355"/>
    </location>
</feature>
<feature type="modified residue" description="Phosphotyrosine; by ABL1 and SRC" evidence="2">
    <location>
        <position position="452"/>
    </location>
</feature>
<feature type="modified residue" description="Phosphotyrosine; by ABL1" evidence="2">
    <location>
        <position position="780"/>
    </location>
</feature>
<feature type="modified residue" description="Phosphoserine" evidence="36">
    <location>
        <position position="935"/>
    </location>
</feature>
<feature type="modified residue" description="Phosphoserine" evidence="36">
    <location>
        <position position="1460"/>
    </location>
</feature>
<feature type="modified residue" description="Phosphotyrosine; by ABL1" evidence="2">
    <location>
        <position position="1471"/>
    </location>
</feature>
<feature type="modified residue" description="Phosphotyrosine; by ABL1" evidence="2">
    <location>
        <position position="1597"/>
    </location>
</feature>
<feature type="modified residue" description="Phosphotyrosine; by ABL1" evidence="2">
    <location>
        <position position="1657"/>
    </location>
</feature>
<feature type="modified residue" description="Phosphoserine" evidence="36">
    <location>
        <position position="1781"/>
    </location>
</feature>
<feature type="modified residue" description="Phosphoserine" evidence="35 36">
    <location>
        <position position="1782"/>
    </location>
</feature>
<feature type="modified residue" description="Phosphoserine" evidence="2">
    <location>
        <position position="1794"/>
    </location>
</feature>
<feature type="modified residue" description="Phosphoserine" evidence="36">
    <location>
        <position position="1795"/>
    </location>
</feature>
<feature type="modified residue" description="Phosphoserine" evidence="35 36">
    <location>
        <position position="1798"/>
    </location>
</feature>
<feature type="modified residue" description="Phosphothreonine" evidence="36">
    <location>
        <position position="1800"/>
    </location>
</feature>
<feature type="modified residue" description="Phosphoserine" evidence="36">
    <location>
        <position position="1801"/>
    </location>
</feature>
<feature type="disulfide bond" evidence="4">
    <location>
        <begin position="177"/>
        <end position="228"/>
    </location>
</feature>
<feature type="disulfide bond" evidence="4">
    <location>
        <begin position="423"/>
        <end position="475"/>
    </location>
</feature>
<feature type="disulfide bond" evidence="4">
    <location>
        <begin position="523"/>
        <end position="571"/>
    </location>
</feature>
<feature type="disulfide bond" evidence="4">
    <location>
        <begin position="730"/>
        <end position="793"/>
    </location>
</feature>
<feature type="disulfide bond" evidence="4">
    <location>
        <begin position="1141"/>
        <end position="1192"/>
    </location>
</feature>
<feature type="disulfide bond" evidence="4">
    <location>
        <begin position="1852"/>
        <end position="1904"/>
    </location>
</feature>
<feature type="splice variant" id="VSP_018848" description="In isoform 4." evidence="24">
    <location>
        <begin position="1"/>
        <end position="1782"/>
    </location>
</feature>
<feature type="splice variant" id="VSP_052002" description="In isoform 2." evidence="25">
    <location>
        <begin position="1"/>
        <end position="1254"/>
    </location>
</feature>
<feature type="splice variant" id="VSP_018847" description="In isoform 3." evidence="23">
    <location>
        <begin position="1"/>
        <end position="910"/>
    </location>
</feature>
<feature type="splice variant" id="VSP_052003" description="In isoform 2." evidence="25">
    <original>KA</original>
    <variation>MQ</variation>
    <location>
        <begin position="1255"/>
        <end position="1256"/>
    </location>
</feature>
<feature type="sequence conflict" description="In Ref. 3 and 6." evidence="26" ref="3 6">
    <original>W</original>
    <variation>G</variation>
    <location>
        <position position="173"/>
    </location>
</feature>
<feature type="sequence conflict" description="In Ref. 6; AAK53241." evidence="26" ref="6">
    <original>S</original>
    <variation>A</variation>
    <location>
        <position position="252"/>
    </location>
</feature>
<feature type="sequence conflict" description="In Ref. 3 and 6." evidence="26" ref="3 6">
    <original>RK</original>
    <variation>GR</variation>
    <location>
        <begin position="471"/>
        <end position="472"/>
    </location>
</feature>
<feature type="sequence conflict" description="In Ref. 3; AAO85807." evidence="26" ref="3">
    <original>S</original>
    <variation>T</variation>
    <location>
        <position position="478"/>
    </location>
</feature>
<feature type="sequence conflict" description="In Ref. 3; AAO85807." evidence="26" ref="3">
    <original>G</original>
    <variation>A</variation>
    <location>
        <position position="482"/>
    </location>
</feature>
<feature type="sequence conflict" description="In Ref. 3; AAO85807." evidence="26" ref="3">
    <original>HS</original>
    <variation>TP</variation>
    <location>
        <begin position="666"/>
        <end position="667"/>
    </location>
</feature>
<feature type="sequence conflict" description="In Ref. 3; AAO85807." evidence="26" ref="3">
    <original>D</original>
    <variation>S</variation>
    <location>
        <position position="677"/>
    </location>
</feature>
<feature type="sequence conflict" description="In Ref. 3; AAO85807." evidence="26" ref="3">
    <original>LS</original>
    <variation>SP</variation>
    <location>
        <begin position="749"/>
        <end position="750"/>
    </location>
</feature>
<feature type="sequence conflict" description="In Ref. 3; AAO85807." evidence="26" ref="3">
    <original>A</original>
    <variation>G</variation>
    <location>
        <position position="1004"/>
    </location>
</feature>
<feature type="sequence conflict" description="In Ref. 3; AAO85807." evidence="26" ref="3">
    <original>G</original>
    <variation>A</variation>
    <location>
        <position position="1038"/>
    </location>
</feature>
<feature type="sequence conflict" description="In Ref. 3; AAO85807." evidence="26" ref="3">
    <original>A</original>
    <variation>R</variation>
    <location>
        <position position="1106"/>
    </location>
</feature>
<feature type="sequence conflict" description="In Ref. 3; AAO85807." evidence="26" ref="3">
    <original>RFSVSIEK</original>
    <variation>TFLCLHRE</variation>
    <location>
        <begin position="1174"/>
        <end position="1181"/>
    </location>
</feature>
<feature type="sequence conflict" description="In Ref. 3; AAO85807." evidence="26" ref="3">
    <original>D</original>
    <variation>A</variation>
    <location>
        <position position="1210"/>
    </location>
</feature>
<feature type="sequence conflict" description="In Ref. 3; AAO85807." evidence="26" ref="3">
    <original>I</original>
    <variation>T</variation>
    <location>
        <position position="1289"/>
    </location>
</feature>
<feature type="sequence conflict" description="In Ref. 4; BAE36678." evidence="26" ref="4">
    <location>
        <position position="1340"/>
    </location>
</feature>
<feature type="sequence conflict" description="In Ref. 3; AAO85807." evidence="26" ref="3">
    <original>T</original>
    <variation>H</variation>
    <location>
        <position position="1409"/>
    </location>
</feature>
<feature type="sequence conflict" description="In Ref. 5; AAH58610." evidence="26" ref="5">
    <original>Y</original>
    <variation>H</variation>
    <location>
        <position position="1657"/>
    </location>
</feature>
<feature type="sequence conflict" description="In Ref. 3; AAO85807." evidence="26" ref="3">
    <original>G</original>
    <variation>R</variation>
    <location>
        <position position="1661"/>
    </location>
</feature>
<feature type="sequence conflict" description="In Ref. 3; AAO85807." evidence="26" ref="3">
    <original>S</original>
    <variation>R</variation>
    <location>
        <position position="1678"/>
    </location>
</feature>
<feature type="sequence conflict" description="In Ref. 3; AAO85807." evidence="26" ref="3">
    <original>A</original>
    <variation>E</variation>
    <location>
        <position position="1706"/>
    </location>
</feature>
<feature type="sequence conflict" description="In Ref. 3; AAO85807." evidence="26" ref="3">
    <original>CTQC</original>
    <variation>STHG</variation>
    <location>
        <begin position="1732"/>
        <end position="1735"/>
    </location>
</feature>
<feature type="sequence conflict" description="In Ref. 3; AAO85807." evidence="26" ref="3">
    <original>E</original>
    <variation>K</variation>
    <location>
        <position position="1825"/>
    </location>
</feature>
<feature type="sequence conflict" description="In Ref. 2; AAG34169." evidence="26" ref="2">
    <original>S</original>
    <variation>T</variation>
    <location>
        <position position="1888"/>
    </location>
</feature>
<feature type="sequence conflict" description="In Ref. 5; AAH58610." evidence="26" ref="5">
    <location>
        <position position="1941"/>
    </location>
</feature>
<protein>
    <recommendedName>
        <fullName>Myosin light chain kinase, smooth muscle</fullName>
        <shortName>MLCK</shortName>
        <shortName>smMLCK</shortName>
        <ecNumber>2.7.11.18</ecNumber>
    </recommendedName>
    <alternativeName>
        <fullName>Kinase-related protein</fullName>
        <shortName>KRP</shortName>
    </alternativeName>
    <alternativeName>
        <fullName>Telokin</fullName>
    </alternativeName>
    <component>
        <recommendedName>
            <fullName>Myosin light chain kinase, smooth muscle, deglutamylated form</fullName>
        </recommendedName>
    </component>
</protein>
<accession>Q6PDN3</accession>
<accession>Q3TSJ7</accession>
<accession>Q80UX0</accession>
<accession>Q80YN7</accession>
<accession>Q80YN8</accession>
<accession>Q8K026</accession>
<accession>Q924D2</accession>
<accession>Q9ERD3</accession>
<comment type="function">
    <text evidence="10 11 12 14 15 17 18 19 20">Calcium/calmodulin-dependent myosin light chain kinase implicated in smooth muscle contraction via phosphorylation of myosin light chains (MLC). Also regulates actin-myosin interaction through a non-kinase activity. Phosphorylates PTK2B/PYK2 and myosin light-chains. Involved in the inflammatory response (e.g. apoptosis, vascular permeability, leukocyte diapedesis), cell motility and morphology, airway hyperreactivity and other activities relevant to asthma. Required for tonic airway smooth muscle contraction that is necessary for physiological and asthmatic airway resistance. Necessary for gastrointestinal motility. Implicated in the regulation of endothelial as well as vascular permeability, probably via the regulation of cytoskeletal rearrangements. In the nervous system it has been shown to control the growth initiation of astrocytic processes in culture and to participate in transmitter release at synapses formed between cultured sympathetic ganglion cells. Critical participant in signaling sequences that result in fibroblast apoptosis. Plays a role in the regulation of epithelial cell survival. Required for epithelial wound healing, especially during actomyosin ring contraction during purse-string wound closure. Mediates RhoA-dependent membrane blebbing. Triggers TRPC5 channel activity in a calcium-dependent signaling, by inducing its subcellular localization at the plasma membrane. Promotes cell migration (including tumor cells) and tumor metastasis. PTK2B/PYK2 activation by phosphorylation mediates ITGB2 activation and is thus essential to trigger neutrophil transmigration during acute lung injury (ALI). May regulate optic nerve head astrocyte migration. Probably involved in mitotic cytoskeletal regulation. Regulates tight junction probably by modulating ZO-1 exchange in the perijunctional actomyosin ring. Mediates burn-induced microvascular barrier injury; triggers endothelial contraction in the development of microvascular hyperpermeability by phosphorylating MLC. Essential for intestinal barrier dysfunction. Mediates Giardia spp.-mediated reduced epithelial barrier function during giardiasis intestinal infection via reorganization of cytoskeletal F-actin and tight junctional ZO-1. Necessary for hypotonicity-induced Ca(2+) entry and subsequent activation of volume-sensitive organic osmolyte/anion channels (VSOAC) in cervical cancer cells.</text>
</comment>
<comment type="catalytic activity">
    <reaction evidence="10">
        <text>L-seryl-[myosin light chain] + ATP = O-phospho-L-seryl-[myosin light chain] + ADP + H(+)</text>
        <dbReference type="Rhea" id="RHEA:22004"/>
        <dbReference type="Rhea" id="RHEA-COMP:13684"/>
        <dbReference type="Rhea" id="RHEA-COMP:13685"/>
        <dbReference type="ChEBI" id="CHEBI:15378"/>
        <dbReference type="ChEBI" id="CHEBI:29999"/>
        <dbReference type="ChEBI" id="CHEBI:30616"/>
        <dbReference type="ChEBI" id="CHEBI:83421"/>
        <dbReference type="ChEBI" id="CHEBI:456216"/>
        <dbReference type="EC" id="2.7.11.18"/>
    </reaction>
</comment>
<comment type="catalytic activity">
    <reaction evidence="10">
        <text>L-threonyl-[myosin light chain] + ATP = O-phospho-L-threonyl-[myosin light chain] + ADP + H(+)</text>
        <dbReference type="Rhea" id="RHEA:53900"/>
        <dbReference type="Rhea" id="RHEA-COMP:13686"/>
        <dbReference type="Rhea" id="RHEA-COMP:13687"/>
        <dbReference type="ChEBI" id="CHEBI:15378"/>
        <dbReference type="ChEBI" id="CHEBI:30013"/>
        <dbReference type="ChEBI" id="CHEBI:30616"/>
        <dbReference type="ChEBI" id="CHEBI:61977"/>
        <dbReference type="ChEBI" id="CHEBI:456216"/>
        <dbReference type="EC" id="2.7.11.18"/>
    </reaction>
</comment>
<comment type="cofactor">
    <cofactor evidence="1">
        <name>Mg(2+)</name>
        <dbReference type="ChEBI" id="CHEBI:18420"/>
    </cofactor>
</comment>
<comment type="cofactor">
    <cofactor evidence="1">
        <name>Ca(2+)</name>
        <dbReference type="ChEBI" id="CHEBI:29108"/>
    </cofactor>
</comment>
<comment type="subunit">
    <text evidence="1 16 18">All isoforms including Telokin bind calmodulin. Interacts with CTTN; this interaction is reduced during thrombin-induced endothelial cell (EC) contraction but is promoted by the barrier-protective agonist sphingosine 1-phosphate (S1P) within lamellipodia. A complex made of ABL1, CTTN and MYLK regulates cortical actin-based cytoskeletal rearrangement critical to sphingosine 1-phosphate (S1P)-mediated endothelial cell (EC) barrier enhancement. Binds to NAA10/ARD1 (By similarity). Interacts with SVIL and PTK2B/PYK2.</text>
</comment>
<comment type="interaction">
    <interactant intactId="EBI-647412">
        <id>Q6PDN3</id>
    </interactant>
    <interactant intactId="EBI-647451">
        <id>Q9JMG9</id>
        <label>Patz1</label>
    </interactant>
    <organismsDiffer>false</organismsDiffer>
    <experiments>3</experiments>
</comment>
<comment type="subcellular location">
    <subcellularLocation>
        <location evidence="10">Cytoplasm</location>
    </subcellularLocation>
    <subcellularLocation>
        <location evidence="2">Cell projection</location>
        <location evidence="2">Lamellipodium</location>
    </subcellularLocation>
    <subcellularLocation>
        <location evidence="2">Cleavage furrow</location>
    </subcellularLocation>
    <subcellularLocation>
        <location evidence="10">Cytoplasm</location>
        <location evidence="10">Cytoskeleton</location>
        <location evidence="10">Stress fiber</location>
    </subcellularLocation>
    <text evidence="2">Localized to stress fibers during interphase and to the cleavage furrow during mitosis.</text>
</comment>
<comment type="subcellular location">
    <molecule>Isoform 1</molecule>
    <subcellularLocation>
        <location evidence="10">Cytoplasm</location>
        <location evidence="10">Cytoskeleton</location>
        <location evidence="10">Stress fiber</location>
    </subcellularLocation>
</comment>
<comment type="subcellular location">
    <molecule>Isoform 3</molecule>
    <subcellularLocation>
        <location evidence="10">Cytoplasm</location>
    </subcellularLocation>
    <text evidence="10">Throughout the cytoplasm with higher levels near the plasma membrane.</text>
</comment>
<comment type="alternative products">
    <event type="alternative promoter"/>
    <event type="alternative splicing"/>
    <isoform>
        <id>Q6PDN3-1</id>
        <name evidence="10">1</name>
        <name evidence="10">Non muscle isozyme</name>
        <sequence type="displayed"/>
    </isoform>
    <isoform>
        <id>Q6PDN3-2</id>
        <name evidence="13">2</name>
        <sequence type="described" ref="VSP_052002 VSP_052003"/>
    </isoform>
    <isoform>
        <id>Q6PDN3-3</id>
        <name>3</name>
        <name>Smooth muscle isozyme</name>
        <sequence type="described" ref="VSP_018847"/>
    </isoform>
    <isoform>
        <id>Q6PDN3-4</id>
        <name>4</name>
        <name>Telokin</name>
        <sequence type="described" ref="VSP_018848"/>
    </isoform>
</comment>
<comment type="tissue specificity">
    <text evidence="9 10 22">Smooth muscle isoform is expressed in all tissues with highest levels in bladder, uterus, vas deferens, colon, ileum, and tracheae. Isoform 1 is expressed in lung, bladder, and vas deferens. Telokin is expressed in smooth muscle cells of the gut, reproductive tract and urinary tract, including in uterus, vas deferens, bladder, colon, kidney, ureter and ovary. Telokin is also detected in the trachea.</text>
</comment>
<comment type="developmental stage">
    <text evidence="9 10">Isoform 1 is widely expressed at 14.5 dpc embryos with highest levels in some areas of the developing brain, the lower gastrointestinal tract, as well as certain blood vessels. Primary cultures of endothelial cells lose high level expression of smooth muscle isoform with increasing number of passages. Telokin is expressed in the embryonic gut from 11.5 dpc with highest level at 15.5 dpc. Also expressed in developing bronchi from 13.5 dpc. High levels in 15.5 dpc bladder, ureter, urethra and rectum. Telokin expression is induced in reproductive tract during postnatal development.</text>
</comment>
<comment type="PTM">
    <text evidence="1">Can probably be down-regulated by phosphorylation. Tyrosine phosphorylation by ABL1 increases kinase activity, reverses MLCK-mediated inhibition of Arp2/3-mediated actin polymerization, and enhances CTTN-binding. Phosphorylation by SRC at Tyr-452 promotes CTTN binding (By similarity).</text>
</comment>
<comment type="PTM">
    <text evidence="21">The C-terminus is deglutamylated by AGTPBP1/CCP1, AGBL1/CCP4 and AGBL4/CCP6, leading to the formation of Myosin light chain kinase, smooth muscle, deglutamylated form. The consequences of C-terminal deglutamylation are unknown (PubMed:21074048).</text>
</comment>
<comment type="disruption phenotype">
    <text evidence="12 15">Mice lacking isoform 1 show a reduced flow-mediated dilation of small mesenteric arteries but no significant changes in main cardiovascular function. Increased survival from burn. Prevention of epithelial MLC phosphorylation, tight junction disruption, protein leak, and diarrhea following T-cell activation.</text>
</comment>
<comment type="miscellaneous">
    <molecule>Isoform 2</molecule>
    <text evidence="26">Might be produced by alternative promoter usage and alternative splicing.</text>
</comment>
<comment type="miscellaneous">
    <molecule>Isoform 3</molecule>
    <text evidence="26">Produced by alternative promoter usage.</text>
</comment>
<comment type="miscellaneous">
    <molecule>Isoform 4</molecule>
    <text evidence="26">Produced by alternative promoter usage.</text>
</comment>
<comment type="similarity">
    <text evidence="26">Belongs to the protein kinase superfamily. CAMK Ser/Thr protein kinase family.</text>
</comment>
<comment type="sequence caution" evidence="26">
    <conflict type="erroneous initiation">
        <sequence resource="EMBL-CDS" id="AAH58610"/>
    </conflict>
</comment>
<comment type="sequence caution" evidence="26">
    <conflict type="erroneous initiation">
        <sequence resource="EMBL-CDS" id="AAO85807"/>
    </conflict>
</comment>
<keyword id="KW-0009">Actin-binding</keyword>
<keyword id="KW-0877">Alternative promoter usage</keyword>
<keyword id="KW-0025">Alternative splicing</keyword>
<keyword id="KW-0067">ATP-binding</keyword>
<keyword id="KW-0106">Calcium</keyword>
<keyword id="KW-0112">Calmodulin-binding</keyword>
<keyword id="KW-0966">Cell projection</keyword>
<keyword id="KW-0963">Cytoplasm</keyword>
<keyword id="KW-0206">Cytoskeleton</keyword>
<keyword id="KW-1015">Disulfide bond</keyword>
<keyword id="KW-0393">Immunoglobulin domain</keyword>
<keyword id="KW-0418">Kinase</keyword>
<keyword id="KW-0460">Magnesium</keyword>
<keyword id="KW-0479">Metal-binding</keyword>
<keyword id="KW-0547">Nucleotide-binding</keyword>
<keyword id="KW-0597">Phosphoprotein</keyword>
<keyword id="KW-1185">Reference proteome</keyword>
<keyword id="KW-0677">Repeat</keyword>
<keyword id="KW-0723">Serine/threonine-protein kinase</keyword>
<keyword id="KW-0808">Transferase</keyword>
<organism>
    <name type="scientific">Mus musculus</name>
    <name type="common">Mouse</name>
    <dbReference type="NCBI Taxonomy" id="10090"/>
    <lineage>
        <taxon>Eukaryota</taxon>
        <taxon>Metazoa</taxon>
        <taxon>Chordata</taxon>
        <taxon>Craniata</taxon>
        <taxon>Vertebrata</taxon>
        <taxon>Euteleostomi</taxon>
        <taxon>Mammalia</taxon>
        <taxon>Eutheria</taxon>
        <taxon>Euarchontoglires</taxon>
        <taxon>Glires</taxon>
        <taxon>Rodentia</taxon>
        <taxon>Myomorpha</taxon>
        <taxon>Muroidea</taxon>
        <taxon>Muridae</taxon>
        <taxon>Murinae</taxon>
        <taxon>Mus</taxon>
        <taxon>Mus</taxon>
    </lineage>
</organism>
<evidence type="ECO:0000250" key="1"/>
<evidence type="ECO:0000250" key="2">
    <source>
        <dbReference type="UniProtKB" id="Q15746"/>
    </source>
</evidence>
<evidence type="ECO:0000255" key="3"/>
<evidence type="ECO:0000255" key="4">
    <source>
        <dbReference type="PROSITE-ProRule" id="PRU00114"/>
    </source>
</evidence>
<evidence type="ECO:0000255" key="5">
    <source>
        <dbReference type="PROSITE-ProRule" id="PRU00159"/>
    </source>
</evidence>
<evidence type="ECO:0000255" key="6">
    <source>
        <dbReference type="PROSITE-ProRule" id="PRU00316"/>
    </source>
</evidence>
<evidence type="ECO:0000255" key="7">
    <source>
        <dbReference type="PROSITE-ProRule" id="PRU10027"/>
    </source>
</evidence>
<evidence type="ECO:0000256" key="8">
    <source>
        <dbReference type="SAM" id="MobiDB-lite"/>
    </source>
</evidence>
<evidence type="ECO:0000269" key="9">
    <source>
    </source>
</evidence>
<evidence type="ECO:0000269" key="10">
    <source>
    </source>
</evidence>
<evidence type="ECO:0000269" key="11">
    <source>
    </source>
</evidence>
<evidence type="ECO:0000269" key="12">
    <source>
    </source>
</evidence>
<evidence type="ECO:0000269" key="13">
    <source>
    </source>
</evidence>
<evidence type="ECO:0000269" key="14">
    <source>
    </source>
</evidence>
<evidence type="ECO:0000269" key="15">
    <source>
    </source>
</evidence>
<evidence type="ECO:0000269" key="16">
    <source>
    </source>
</evidence>
<evidence type="ECO:0000269" key="17">
    <source>
    </source>
</evidence>
<evidence type="ECO:0000269" key="18">
    <source>
    </source>
</evidence>
<evidence type="ECO:0000269" key="19">
    <source>
    </source>
</evidence>
<evidence type="ECO:0000269" key="20">
    <source>
    </source>
</evidence>
<evidence type="ECO:0000269" key="21">
    <source>
    </source>
</evidence>
<evidence type="ECO:0000269" key="22">
    <source>
    </source>
</evidence>
<evidence type="ECO:0000303" key="23">
    <source>
    </source>
</evidence>
<evidence type="ECO:0000303" key="24">
    <source>
    </source>
</evidence>
<evidence type="ECO:0000303" key="25">
    <source>
    </source>
</evidence>
<evidence type="ECO:0000305" key="26"/>
<evidence type="ECO:0000312" key="27">
    <source>
        <dbReference type="EMBL" id="AAG34169.1"/>
    </source>
</evidence>
<evidence type="ECO:0000312" key="28">
    <source>
        <dbReference type="EMBL" id="AAH34209.1"/>
    </source>
</evidence>
<evidence type="ECO:0000312" key="29">
    <source>
        <dbReference type="EMBL" id="AAH45197.1"/>
    </source>
</evidence>
<evidence type="ECO:0000312" key="30">
    <source>
        <dbReference type="EMBL" id="AAH58610.2"/>
    </source>
</evidence>
<evidence type="ECO:0000312" key="31">
    <source>
        <dbReference type="EMBL" id="AAK53241.1"/>
    </source>
</evidence>
<evidence type="ECO:0000312" key="32">
    <source>
        <dbReference type="EMBL" id="AAO85807.1"/>
    </source>
</evidence>
<evidence type="ECO:0000312" key="33">
    <source>
        <dbReference type="EMBL" id="BAE36678.1"/>
    </source>
</evidence>
<evidence type="ECO:0000312" key="34">
    <source>
        <dbReference type="MGI" id="MGI:894806"/>
    </source>
</evidence>
<evidence type="ECO:0007744" key="35">
    <source>
    </source>
</evidence>
<evidence type="ECO:0007744" key="36">
    <source>
    </source>
</evidence>
<gene>
    <name evidence="30 34" type="primary">Mylk</name>
</gene>